<organism>
    <name type="scientific">Pan troglodytes</name>
    <name type="common">Chimpanzee</name>
    <dbReference type="NCBI Taxonomy" id="9598"/>
    <lineage>
        <taxon>Eukaryota</taxon>
        <taxon>Metazoa</taxon>
        <taxon>Chordata</taxon>
        <taxon>Craniata</taxon>
        <taxon>Vertebrata</taxon>
        <taxon>Euteleostomi</taxon>
        <taxon>Mammalia</taxon>
        <taxon>Eutheria</taxon>
        <taxon>Euarchontoglires</taxon>
        <taxon>Primates</taxon>
        <taxon>Haplorrhini</taxon>
        <taxon>Catarrhini</taxon>
        <taxon>Hominidae</taxon>
        <taxon>Pan</taxon>
    </lineage>
</organism>
<name>NDUS2_PANTR</name>
<proteinExistence type="evidence at transcript level"/>
<sequence length="463" mass="52564">MAALRALCGFRGVAAQVLRPGAGVRLPIQPSRGVRQWQPDVEWAQQFGGAVMYPSKETAHWKPPPWNDVDPPKDTIVKNMTLNFGPQHPAAHGVLRLVMELSGEMVRKCDPHIGLLHRGTEKLIEYKTYLQALPYFDRLDYVSMMCNEQAYSLAVEKLLNIRPPPRAQWIRVLFGEITRLLNHIMAVTTHALDLGAMTPFFWLFEEREKMFEFYERVSGARMHAAYIRPGGVHQDLPLGLMDDIYQFSKNFSLRLDELEELLTNNRIWRNRTIDIGVVTAEEALNYGFSGVMLRGSGIQWDLRKTQPYDVYDQVEFDVPVGSRGDCYDRYLCRVEEMRQSLRIIAQCLNKMPPGEIKVDDAKVSPPKRAEMKTSMESLIHHFKLYTEGYQVPPGATYTAIEAPKGEFGVYLVSDGSSRPYRCKIKAPGFAHLAGLDKMSKGHMLADVVAIIGTQDIVFGEVDR</sequence>
<keyword id="KW-0004">4Fe-4S</keyword>
<keyword id="KW-0007">Acetylation</keyword>
<keyword id="KW-0249">Electron transport</keyword>
<keyword id="KW-0408">Iron</keyword>
<keyword id="KW-0411">Iron-sulfur</keyword>
<keyword id="KW-0472">Membrane</keyword>
<keyword id="KW-0479">Metal-binding</keyword>
<keyword id="KW-0488">Methylation</keyword>
<keyword id="KW-0496">Mitochondrion</keyword>
<keyword id="KW-0999">Mitochondrion inner membrane</keyword>
<keyword id="KW-0520">NAD</keyword>
<keyword id="KW-0560">Oxidoreductase</keyword>
<keyword id="KW-1185">Reference proteome</keyword>
<keyword id="KW-0679">Respiratory chain</keyword>
<keyword id="KW-0809">Transit peptide</keyword>
<keyword id="KW-1278">Translocase</keyword>
<keyword id="KW-0813">Transport</keyword>
<keyword id="KW-0830">Ubiquinone</keyword>
<accession>Q0MQG5</accession>
<reference key="1">
    <citation type="journal article" date="2006" name="Gene">
        <title>Adaptive selection of mitochondrial complex I subunits during primate radiation.</title>
        <authorList>
            <person name="Mishmar D."/>
            <person name="Ruiz-Pesini E."/>
            <person name="Mondragon-Palomino M."/>
            <person name="Procaccio V."/>
            <person name="Gaut B."/>
            <person name="Wallace D.C."/>
        </authorList>
    </citation>
    <scope>NUCLEOTIDE SEQUENCE [MRNA]</scope>
</reference>
<comment type="function">
    <text evidence="4">Core subunit of the mitochondrial membrane respiratory chain NADH dehydrogenase (Complex I) which catalyzes electron transfer from NADH through the respiratory chain, using ubiquinone as an electron acceptor (By similarity). Essential for the catalytic activity and assembly of complex I (By similarity). Redox-sensitive, critical component of the oxygen-sensing pathway in the pulmonary vasculature which plays a key role in acute pulmonary oxygen-sensing and hypoxic pulmonary vasoconstriction (By similarity). Plays an important role in carotid body sensing of hypoxia (By similarity). Essential for glia-like neural stem and progenitor cell proliferation, differentiation and subsequent oligodendrocyte or neuronal maturation (By similarity).</text>
</comment>
<comment type="catalytic activity">
    <reaction evidence="4">
        <text>a ubiquinone + NADH + 5 H(+)(in) = a ubiquinol + NAD(+) + 4 H(+)(out)</text>
        <dbReference type="Rhea" id="RHEA:29091"/>
        <dbReference type="Rhea" id="RHEA-COMP:9565"/>
        <dbReference type="Rhea" id="RHEA-COMP:9566"/>
        <dbReference type="ChEBI" id="CHEBI:15378"/>
        <dbReference type="ChEBI" id="CHEBI:16389"/>
        <dbReference type="ChEBI" id="CHEBI:17976"/>
        <dbReference type="ChEBI" id="CHEBI:57540"/>
        <dbReference type="ChEBI" id="CHEBI:57945"/>
        <dbReference type="EC" id="7.1.1.2"/>
    </reaction>
</comment>
<comment type="cofactor">
    <cofactor>
        <name>[4Fe-4S] cluster</name>
        <dbReference type="ChEBI" id="CHEBI:49883"/>
    </cofactor>
    <text>Binds 1 [4Fe-4S] cluster.</text>
</comment>
<comment type="subunit">
    <text evidence="1 4">Core subunit of respiratory chain NADH dehydrogenase (Complex I) which is composed of 45 different subunits. Component of the iron-sulfur (IP) fragment of the enzyme. Interacts with NDUFAF3. Interacts with NDUFAF7 (By similarity). Interacts with CERS2 (By similarity).</text>
</comment>
<comment type="subcellular location">
    <subcellularLocation>
        <location evidence="3">Mitochondrion inner membrane</location>
        <topology evidence="3">Peripheral membrane protein</topology>
        <orientation evidence="3">Matrix side</orientation>
    </subcellularLocation>
</comment>
<comment type="PTM">
    <text evidence="1">Dimethylation at Arg-118 by NDUFAF7 takes place after NDUFS2 assembles into the complex I, leading to stabilize the early intermediate complex.</text>
</comment>
<comment type="similarity">
    <text evidence="6">Belongs to the complex I 49 kDa subunit family.</text>
</comment>
<evidence type="ECO:0000250" key="1">
    <source>
        <dbReference type="UniProtKB" id="O75306"/>
    </source>
</evidence>
<evidence type="ECO:0000250" key="2">
    <source>
        <dbReference type="UniProtKB" id="P17694"/>
    </source>
</evidence>
<evidence type="ECO:0000250" key="3">
    <source>
        <dbReference type="UniProtKB" id="Q641Y2"/>
    </source>
</evidence>
<evidence type="ECO:0000250" key="4">
    <source>
        <dbReference type="UniProtKB" id="Q91WD5"/>
    </source>
</evidence>
<evidence type="ECO:0000255" key="5"/>
<evidence type="ECO:0000305" key="6"/>
<gene>
    <name type="primary">NDUFS2</name>
</gene>
<dbReference type="EC" id="7.1.1.2" evidence="4"/>
<dbReference type="EMBL" id="DQ885669">
    <property type="protein sequence ID" value="ABH12178.1"/>
    <property type="molecule type" value="mRNA"/>
</dbReference>
<dbReference type="RefSeq" id="NP_001065294.1">
    <property type="nucleotide sequence ID" value="NM_001071826.1"/>
</dbReference>
<dbReference type="RefSeq" id="XP_009432179.1">
    <property type="nucleotide sequence ID" value="XM_009433904.4"/>
</dbReference>
<dbReference type="RefSeq" id="XP_009432189.1">
    <property type="nucleotide sequence ID" value="XM_009433914.4"/>
</dbReference>
<dbReference type="SMR" id="Q0MQG5"/>
<dbReference type="FunCoup" id="Q0MQG5">
    <property type="interactions" value="1797"/>
</dbReference>
<dbReference type="STRING" id="9598.ENSPTRP00000002642"/>
<dbReference type="PaxDb" id="9598-ENSPTRP00000002642"/>
<dbReference type="Ensembl" id="ENSPTRT00000002879.5">
    <property type="protein sequence ID" value="ENSPTRP00000002642.4"/>
    <property type="gene ID" value="ENSPTRG00000001577.5"/>
</dbReference>
<dbReference type="GeneID" id="747334"/>
<dbReference type="KEGG" id="ptr:747334"/>
<dbReference type="CTD" id="4720"/>
<dbReference type="VGNC" id="VGNC:8078">
    <property type="gene designation" value="NDUFS2"/>
</dbReference>
<dbReference type="eggNOG" id="KOG2870">
    <property type="taxonomic scope" value="Eukaryota"/>
</dbReference>
<dbReference type="GeneTree" id="ENSGT00390000009529"/>
<dbReference type="HOGENOM" id="CLU_015134_1_1_1"/>
<dbReference type="InParanoid" id="Q0MQG5"/>
<dbReference type="OMA" id="TRMDYLT"/>
<dbReference type="OrthoDB" id="1960at9604"/>
<dbReference type="TreeFam" id="TF300370"/>
<dbReference type="Proteomes" id="UP000002277">
    <property type="component" value="Chromosome 1"/>
</dbReference>
<dbReference type="Bgee" id="ENSPTRG00000001577">
    <property type="expression patterns" value="Expressed in heart and 20 other cell types or tissues"/>
</dbReference>
<dbReference type="GO" id="GO:0005743">
    <property type="term" value="C:mitochondrial inner membrane"/>
    <property type="evidence" value="ECO:0000250"/>
    <property type="project" value="UniProtKB"/>
</dbReference>
<dbReference type="GO" id="GO:0005739">
    <property type="term" value="C:mitochondrion"/>
    <property type="evidence" value="ECO:0000250"/>
    <property type="project" value="UniProtKB"/>
</dbReference>
<dbReference type="GO" id="GO:0045271">
    <property type="term" value="C:respiratory chain complex I"/>
    <property type="evidence" value="ECO:0000250"/>
    <property type="project" value="UniProtKB"/>
</dbReference>
<dbReference type="GO" id="GO:0051539">
    <property type="term" value="F:4 iron, 4 sulfur cluster binding"/>
    <property type="evidence" value="ECO:0007669"/>
    <property type="project" value="UniProtKB-KW"/>
</dbReference>
<dbReference type="GO" id="GO:0046872">
    <property type="term" value="F:metal ion binding"/>
    <property type="evidence" value="ECO:0007669"/>
    <property type="project" value="UniProtKB-KW"/>
</dbReference>
<dbReference type="GO" id="GO:0051287">
    <property type="term" value="F:NAD binding"/>
    <property type="evidence" value="ECO:0007669"/>
    <property type="project" value="InterPro"/>
</dbReference>
<dbReference type="GO" id="GO:0008137">
    <property type="term" value="F:NADH dehydrogenase (ubiquinone) activity"/>
    <property type="evidence" value="ECO:0000250"/>
    <property type="project" value="UniProtKB"/>
</dbReference>
<dbReference type="GO" id="GO:0019826">
    <property type="term" value="F:oxygen sensor activity"/>
    <property type="evidence" value="ECO:0000250"/>
    <property type="project" value="UniProtKB"/>
</dbReference>
<dbReference type="GO" id="GO:0048038">
    <property type="term" value="F:quinone binding"/>
    <property type="evidence" value="ECO:0007669"/>
    <property type="project" value="InterPro"/>
</dbReference>
<dbReference type="GO" id="GO:0031625">
    <property type="term" value="F:ubiquitin protein ligase binding"/>
    <property type="evidence" value="ECO:0007669"/>
    <property type="project" value="Ensembl"/>
</dbReference>
<dbReference type="GO" id="GO:0071453">
    <property type="term" value="P:cellular response to oxygen levels"/>
    <property type="evidence" value="ECO:0000250"/>
    <property type="project" value="UniProtKB"/>
</dbReference>
<dbReference type="GO" id="GO:0042063">
    <property type="term" value="P:gliogenesis"/>
    <property type="evidence" value="ECO:0000250"/>
    <property type="project" value="UniProtKB"/>
</dbReference>
<dbReference type="GO" id="GO:0006120">
    <property type="term" value="P:mitochondrial electron transport, NADH to ubiquinone"/>
    <property type="evidence" value="ECO:0000250"/>
    <property type="project" value="UniProtKB"/>
</dbReference>
<dbReference type="GO" id="GO:0032981">
    <property type="term" value="P:mitochondrial respiratory chain complex I assembly"/>
    <property type="evidence" value="ECO:0000250"/>
    <property type="project" value="UniProtKB"/>
</dbReference>
<dbReference type="GO" id="GO:0061351">
    <property type="term" value="P:neural precursor cell proliferation"/>
    <property type="evidence" value="ECO:0000250"/>
    <property type="project" value="UniProtKB"/>
</dbReference>
<dbReference type="GO" id="GO:0022008">
    <property type="term" value="P:neurogenesis"/>
    <property type="evidence" value="ECO:0000250"/>
    <property type="project" value="UniProtKB"/>
</dbReference>
<dbReference type="FunFam" id="1.10.645.10:FF:000005">
    <property type="entry name" value="NADH-quinone oxidoreductase subunit D"/>
    <property type="match status" value="1"/>
</dbReference>
<dbReference type="Gene3D" id="1.10.645.10">
    <property type="entry name" value="Cytochrome-c3 Hydrogenase, chain B"/>
    <property type="match status" value="1"/>
</dbReference>
<dbReference type="HAMAP" id="MF_01358">
    <property type="entry name" value="NDH1_NuoD"/>
    <property type="match status" value="1"/>
</dbReference>
<dbReference type="InterPro" id="IPR001135">
    <property type="entry name" value="NADH_Q_OxRdtase_suD"/>
</dbReference>
<dbReference type="InterPro" id="IPR014029">
    <property type="entry name" value="NADH_UbQ_OxRdtase_49kDa_CS"/>
</dbReference>
<dbReference type="InterPro" id="IPR022885">
    <property type="entry name" value="NDH1_su_D/H"/>
</dbReference>
<dbReference type="InterPro" id="IPR029014">
    <property type="entry name" value="NiFe-Hase_large"/>
</dbReference>
<dbReference type="NCBIfam" id="TIGR01962">
    <property type="entry name" value="NuoD"/>
    <property type="match status" value="1"/>
</dbReference>
<dbReference type="NCBIfam" id="NF004739">
    <property type="entry name" value="PRK06075.1"/>
    <property type="match status" value="1"/>
</dbReference>
<dbReference type="PANTHER" id="PTHR11993:SF10">
    <property type="entry name" value="NADH DEHYDROGENASE [UBIQUINONE] IRON-SULFUR PROTEIN 2, MITOCHONDRIAL"/>
    <property type="match status" value="1"/>
</dbReference>
<dbReference type="PANTHER" id="PTHR11993">
    <property type="entry name" value="NADH-UBIQUINONE OXIDOREDUCTASE 49 KDA SUBUNIT"/>
    <property type="match status" value="1"/>
</dbReference>
<dbReference type="Pfam" id="PF00346">
    <property type="entry name" value="Complex1_49kDa"/>
    <property type="match status" value="1"/>
</dbReference>
<dbReference type="SUPFAM" id="SSF56762">
    <property type="entry name" value="HydB/Nqo4-like"/>
    <property type="match status" value="1"/>
</dbReference>
<dbReference type="PROSITE" id="PS00535">
    <property type="entry name" value="COMPLEX1_49K"/>
    <property type="match status" value="1"/>
</dbReference>
<protein>
    <recommendedName>
        <fullName>NADH dehydrogenase [ubiquinone] iron-sulfur protein 2, mitochondrial</fullName>
        <ecNumber evidence="4">7.1.1.2</ecNumber>
    </recommendedName>
    <alternativeName>
        <fullName>Complex I-49kD</fullName>
        <shortName>CI-49kD</shortName>
    </alternativeName>
    <alternativeName>
        <fullName>NADH-ubiquinone oxidoreductase 49 kDa subunit</fullName>
    </alternativeName>
</protein>
<feature type="transit peptide" description="Mitochondrion" evidence="2">
    <location>
        <begin position="1"/>
        <end position="33"/>
    </location>
</feature>
<feature type="chain" id="PRO_0000251857" description="NADH dehydrogenase [ubiquinone] iron-sulfur protein 2, mitochondrial">
    <location>
        <begin position="34"/>
        <end position="463"/>
    </location>
</feature>
<feature type="binding site" evidence="5">
    <location>
        <position position="326"/>
    </location>
    <ligand>
        <name>[4Fe-4S] cluster</name>
        <dbReference type="ChEBI" id="CHEBI:49883"/>
    </ligand>
</feature>
<feature type="binding site" evidence="5">
    <location>
        <position position="332"/>
    </location>
    <ligand>
        <name>[4Fe-4S] cluster</name>
        <dbReference type="ChEBI" id="CHEBI:49883"/>
    </ligand>
</feature>
<feature type="binding site" evidence="5">
    <location>
        <position position="347"/>
    </location>
    <ligand>
        <name>[4Fe-4S] cluster</name>
        <dbReference type="ChEBI" id="CHEBI:49883"/>
    </ligand>
</feature>
<feature type="modified residue" description="N6-acetyllysine" evidence="4">
    <location>
        <position position="62"/>
    </location>
</feature>
<feature type="modified residue" description="Symmetric dimethylarginine" evidence="2">
    <location>
        <position position="118"/>
    </location>
</feature>